<protein>
    <recommendedName>
        <fullName evidence="1">Alanine--tRNA ligase</fullName>
        <ecNumber evidence="1">6.1.1.7</ecNumber>
    </recommendedName>
    <alternativeName>
        <fullName evidence="1">Alanyl-tRNA synthetase</fullName>
        <shortName evidence="1">AlaRS</shortName>
    </alternativeName>
</protein>
<feature type="chain" id="PRO_0000347720" description="Alanine--tRNA ligase">
    <location>
        <begin position="1"/>
        <end position="874"/>
    </location>
</feature>
<feature type="binding site" evidence="1">
    <location>
        <position position="564"/>
    </location>
    <ligand>
        <name>Zn(2+)</name>
        <dbReference type="ChEBI" id="CHEBI:29105"/>
    </ligand>
</feature>
<feature type="binding site" evidence="1">
    <location>
        <position position="568"/>
    </location>
    <ligand>
        <name>Zn(2+)</name>
        <dbReference type="ChEBI" id="CHEBI:29105"/>
    </ligand>
</feature>
<feature type="binding site" evidence="1">
    <location>
        <position position="665"/>
    </location>
    <ligand>
        <name>Zn(2+)</name>
        <dbReference type="ChEBI" id="CHEBI:29105"/>
    </ligand>
</feature>
<feature type="binding site" evidence="1">
    <location>
        <position position="669"/>
    </location>
    <ligand>
        <name>Zn(2+)</name>
        <dbReference type="ChEBI" id="CHEBI:29105"/>
    </ligand>
</feature>
<proteinExistence type="inferred from homology"/>
<gene>
    <name evidence="1" type="primary">alaS</name>
    <name type="ordered locus">Pnap_2628</name>
</gene>
<keyword id="KW-0030">Aminoacyl-tRNA synthetase</keyword>
<keyword id="KW-0067">ATP-binding</keyword>
<keyword id="KW-0963">Cytoplasm</keyword>
<keyword id="KW-0436">Ligase</keyword>
<keyword id="KW-0479">Metal-binding</keyword>
<keyword id="KW-0547">Nucleotide-binding</keyword>
<keyword id="KW-0648">Protein biosynthesis</keyword>
<keyword id="KW-1185">Reference proteome</keyword>
<keyword id="KW-0694">RNA-binding</keyword>
<keyword id="KW-0820">tRNA-binding</keyword>
<keyword id="KW-0862">Zinc</keyword>
<accession>A1VQK2</accession>
<dbReference type="EC" id="6.1.1.7" evidence="1"/>
<dbReference type="EMBL" id="CP000529">
    <property type="protein sequence ID" value="ABM37930.1"/>
    <property type="molecule type" value="Genomic_DNA"/>
</dbReference>
<dbReference type="RefSeq" id="WP_011802007.1">
    <property type="nucleotide sequence ID" value="NC_008781.1"/>
</dbReference>
<dbReference type="SMR" id="A1VQK2"/>
<dbReference type="STRING" id="365044.Pnap_2628"/>
<dbReference type="KEGG" id="pna:Pnap_2628"/>
<dbReference type="eggNOG" id="COG0013">
    <property type="taxonomic scope" value="Bacteria"/>
</dbReference>
<dbReference type="HOGENOM" id="CLU_004485_1_1_4"/>
<dbReference type="OrthoDB" id="9803884at2"/>
<dbReference type="Proteomes" id="UP000000644">
    <property type="component" value="Chromosome"/>
</dbReference>
<dbReference type="GO" id="GO:0005829">
    <property type="term" value="C:cytosol"/>
    <property type="evidence" value="ECO:0007669"/>
    <property type="project" value="TreeGrafter"/>
</dbReference>
<dbReference type="GO" id="GO:0004813">
    <property type="term" value="F:alanine-tRNA ligase activity"/>
    <property type="evidence" value="ECO:0007669"/>
    <property type="project" value="UniProtKB-UniRule"/>
</dbReference>
<dbReference type="GO" id="GO:0002161">
    <property type="term" value="F:aminoacyl-tRNA deacylase activity"/>
    <property type="evidence" value="ECO:0007669"/>
    <property type="project" value="TreeGrafter"/>
</dbReference>
<dbReference type="GO" id="GO:0005524">
    <property type="term" value="F:ATP binding"/>
    <property type="evidence" value="ECO:0007669"/>
    <property type="project" value="UniProtKB-UniRule"/>
</dbReference>
<dbReference type="GO" id="GO:0000049">
    <property type="term" value="F:tRNA binding"/>
    <property type="evidence" value="ECO:0007669"/>
    <property type="project" value="UniProtKB-KW"/>
</dbReference>
<dbReference type="GO" id="GO:0008270">
    <property type="term" value="F:zinc ion binding"/>
    <property type="evidence" value="ECO:0007669"/>
    <property type="project" value="UniProtKB-UniRule"/>
</dbReference>
<dbReference type="GO" id="GO:0006419">
    <property type="term" value="P:alanyl-tRNA aminoacylation"/>
    <property type="evidence" value="ECO:0007669"/>
    <property type="project" value="UniProtKB-UniRule"/>
</dbReference>
<dbReference type="GO" id="GO:0045892">
    <property type="term" value="P:negative regulation of DNA-templated transcription"/>
    <property type="evidence" value="ECO:0007669"/>
    <property type="project" value="TreeGrafter"/>
</dbReference>
<dbReference type="CDD" id="cd00673">
    <property type="entry name" value="AlaRS_core"/>
    <property type="match status" value="1"/>
</dbReference>
<dbReference type="FunFam" id="2.40.30.130:FF:000001">
    <property type="entry name" value="Alanine--tRNA ligase"/>
    <property type="match status" value="1"/>
</dbReference>
<dbReference type="FunFam" id="3.10.310.40:FF:000001">
    <property type="entry name" value="Alanine--tRNA ligase"/>
    <property type="match status" value="1"/>
</dbReference>
<dbReference type="FunFam" id="3.30.54.20:FF:000001">
    <property type="entry name" value="Alanine--tRNA ligase"/>
    <property type="match status" value="1"/>
</dbReference>
<dbReference type="FunFam" id="3.30.930.10:FF:000004">
    <property type="entry name" value="Alanine--tRNA ligase"/>
    <property type="match status" value="1"/>
</dbReference>
<dbReference type="FunFam" id="3.30.980.10:FF:000004">
    <property type="entry name" value="Alanine--tRNA ligase, cytoplasmic"/>
    <property type="match status" value="1"/>
</dbReference>
<dbReference type="Gene3D" id="2.40.30.130">
    <property type="match status" value="1"/>
</dbReference>
<dbReference type="Gene3D" id="3.10.310.40">
    <property type="match status" value="1"/>
</dbReference>
<dbReference type="Gene3D" id="3.30.54.20">
    <property type="match status" value="1"/>
</dbReference>
<dbReference type="Gene3D" id="6.10.250.550">
    <property type="match status" value="1"/>
</dbReference>
<dbReference type="Gene3D" id="3.30.930.10">
    <property type="entry name" value="Bira Bifunctional Protein, Domain 2"/>
    <property type="match status" value="1"/>
</dbReference>
<dbReference type="Gene3D" id="3.30.980.10">
    <property type="entry name" value="Threonyl-trna Synthetase, Chain A, domain 2"/>
    <property type="match status" value="1"/>
</dbReference>
<dbReference type="HAMAP" id="MF_00036_B">
    <property type="entry name" value="Ala_tRNA_synth_B"/>
    <property type="match status" value="1"/>
</dbReference>
<dbReference type="InterPro" id="IPR045864">
    <property type="entry name" value="aa-tRNA-synth_II/BPL/LPL"/>
</dbReference>
<dbReference type="InterPro" id="IPR002318">
    <property type="entry name" value="Ala-tRNA-lgiase_IIc"/>
</dbReference>
<dbReference type="InterPro" id="IPR018162">
    <property type="entry name" value="Ala-tRNA-ligase_IIc_anticod-bd"/>
</dbReference>
<dbReference type="InterPro" id="IPR018165">
    <property type="entry name" value="Ala-tRNA-synth_IIc_core"/>
</dbReference>
<dbReference type="InterPro" id="IPR018164">
    <property type="entry name" value="Ala-tRNA-synth_IIc_N"/>
</dbReference>
<dbReference type="InterPro" id="IPR050058">
    <property type="entry name" value="Ala-tRNA_ligase"/>
</dbReference>
<dbReference type="InterPro" id="IPR023033">
    <property type="entry name" value="Ala_tRNA_ligase_euk/bac"/>
</dbReference>
<dbReference type="InterPro" id="IPR003156">
    <property type="entry name" value="DHHA1_dom"/>
</dbReference>
<dbReference type="InterPro" id="IPR018163">
    <property type="entry name" value="Thr/Ala-tRNA-synth_IIc_edit"/>
</dbReference>
<dbReference type="InterPro" id="IPR009000">
    <property type="entry name" value="Transl_B-barrel_sf"/>
</dbReference>
<dbReference type="InterPro" id="IPR012947">
    <property type="entry name" value="tRNA_SAD"/>
</dbReference>
<dbReference type="NCBIfam" id="TIGR00344">
    <property type="entry name" value="alaS"/>
    <property type="match status" value="1"/>
</dbReference>
<dbReference type="PANTHER" id="PTHR11777:SF9">
    <property type="entry name" value="ALANINE--TRNA LIGASE, CYTOPLASMIC"/>
    <property type="match status" value="1"/>
</dbReference>
<dbReference type="PANTHER" id="PTHR11777">
    <property type="entry name" value="ALANYL-TRNA SYNTHETASE"/>
    <property type="match status" value="1"/>
</dbReference>
<dbReference type="Pfam" id="PF02272">
    <property type="entry name" value="DHHA1"/>
    <property type="match status" value="1"/>
</dbReference>
<dbReference type="Pfam" id="PF01411">
    <property type="entry name" value="tRNA-synt_2c"/>
    <property type="match status" value="1"/>
</dbReference>
<dbReference type="Pfam" id="PF07973">
    <property type="entry name" value="tRNA_SAD"/>
    <property type="match status" value="1"/>
</dbReference>
<dbReference type="PRINTS" id="PR00980">
    <property type="entry name" value="TRNASYNTHALA"/>
</dbReference>
<dbReference type="SMART" id="SM00863">
    <property type="entry name" value="tRNA_SAD"/>
    <property type="match status" value="1"/>
</dbReference>
<dbReference type="SUPFAM" id="SSF55681">
    <property type="entry name" value="Class II aaRS and biotin synthetases"/>
    <property type="match status" value="1"/>
</dbReference>
<dbReference type="SUPFAM" id="SSF101353">
    <property type="entry name" value="Putative anticodon-binding domain of alanyl-tRNA synthetase (AlaRS)"/>
    <property type="match status" value="1"/>
</dbReference>
<dbReference type="SUPFAM" id="SSF55186">
    <property type="entry name" value="ThrRS/AlaRS common domain"/>
    <property type="match status" value="1"/>
</dbReference>
<dbReference type="SUPFAM" id="SSF50447">
    <property type="entry name" value="Translation proteins"/>
    <property type="match status" value="1"/>
</dbReference>
<dbReference type="PROSITE" id="PS50860">
    <property type="entry name" value="AA_TRNA_LIGASE_II_ALA"/>
    <property type="match status" value="1"/>
</dbReference>
<sequence length="874" mass="94024">MSTPVFTVADIRKTFLDFFAAKGHTVVPSSSLVPGNDPTLMFTNSGMVQFKDVFLGVDKRPYVRATSVQACLRAGGKHNDLENVGYTARHHTFFEMLGNWSFGDYFKRESLKWAWELLTEVYKLPAERLLATVYEEDDEAYDIWTKEIGLPPERVIRIGDNKGGRYKSDNFWMMADTGPCGPCSEIFYDHGDHIPGGPPGSPDEDGDRFIEIWNNVFMQFNMAEDGSVTPLPAPCVDTGMGLERLAAILQHVHSNYEIDIFDALIKAASRETGEADLGHKSLRVIADHIRATAFLVSDGVNPSNEGRGYVQRRIIRRAIRHGYLLGKKTPFFHKLVADLAGLMGDAYPRLAADAQRITEVLKAEEERFFETLETGMQILDAALADGVKVLPGEVAFKLHDTYGFPLDLSADVCRERGLSVDEAGFTVAMNQQKAQARAAGKFKMDRALDYSGTGNVFTGYEHLEETSKIIAIYADGVSAAALKAGQNGVIVLDTTPFYAESGGQAGDEGELISGSARFAVSDTLKIKADVYGHHGTLAEGTLNVGDHVSARVNKEVRAATVRNHSATHLMHKALREVLGAHVQQKGSLVNAERTRFDFAHNAPMTDAQIREVEARVNAEILANSATDASEMDMEAAQKTGAMMLFGEKYGDSVRVLSIGSSKELCGGTHVGRTGDIGLFKIVAESGVASGVRRVEAVTGQNALAYLQSLESTVQSAAGTLKASPSELQNRIGQVLDQVKALEKEVAALKGKLASSQGDELMLQAVDVKGLKVLAARLEGADAKTLRETMDKLKDKLKTAVIVLAAVDGSKVQIAAGVTSDSTGKVKAGELVNFVAGQVGGKGGGKADMAMAGGTDASNLNAALDSVLGWVSAKL</sequence>
<comment type="function">
    <text evidence="1">Catalyzes the attachment of alanine to tRNA(Ala) in a two-step reaction: alanine is first activated by ATP to form Ala-AMP and then transferred to the acceptor end of tRNA(Ala). Also edits incorrectly charged Ser-tRNA(Ala) and Gly-tRNA(Ala) via its editing domain.</text>
</comment>
<comment type="catalytic activity">
    <reaction evidence="1">
        <text>tRNA(Ala) + L-alanine + ATP = L-alanyl-tRNA(Ala) + AMP + diphosphate</text>
        <dbReference type="Rhea" id="RHEA:12540"/>
        <dbReference type="Rhea" id="RHEA-COMP:9657"/>
        <dbReference type="Rhea" id="RHEA-COMP:9923"/>
        <dbReference type="ChEBI" id="CHEBI:30616"/>
        <dbReference type="ChEBI" id="CHEBI:33019"/>
        <dbReference type="ChEBI" id="CHEBI:57972"/>
        <dbReference type="ChEBI" id="CHEBI:78442"/>
        <dbReference type="ChEBI" id="CHEBI:78497"/>
        <dbReference type="ChEBI" id="CHEBI:456215"/>
        <dbReference type="EC" id="6.1.1.7"/>
    </reaction>
</comment>
<comment type="cofactor">
    <cofactor evidence="1">
        <name>Zn(2+)</name>
        <dbReference type="ChEBI" id="CHEBI:29105"/>
    </cofactor>
    <text evidence="1">Binds 1 zinc ion per subunit.</text>
</comment>
<comment type="subcellular location">
    <subcellularLocation>
        <location evidence="1">Cytoplasm</location>
    </subcellularLocation>
</comment>
<comment type="domain">
    <text evidence="1">Consists of three domains; the N-terminal catalytic domain, the editing domain and the C-terminal C-Ala domain. The editing domain removes incorrectly charged amino acids, while the C-Ala domain, along with tRNA(Ala), serves as a bridge to cooperatively bring together the editing and aminoacylation centers thus stimulating deacylation of misacylated tRNAs.</text>
</comment>
<comment type="similarity">
    <text evidence="1">Belongs to the class-II aminoacyl-tRNA synthetase family.</text>
</comment>
<reference key="1">
    <citation type="journal article" date="2009" name="Environ. Microbiol.">
        <title>The genome of Polaromonas naphthalenivorans strain CJ2, isolated from coal tar-contaminated sediment, reveals physiological and metabolic versatility and evolution through extensive horizontal gene transfer.</title>
        <authorList>
            <person name="Yagi J.M."/>
            <person name="Sims D."/>
            <person name="Brettin T."/>
            <person name="Bruce D."/>
            <person name="Madsen E.L."/>
        </authorList>
    </citation>
    <scope>NUCLEOTIDE SEQUENCE [LARGE SCALE GENOMIC DNA]</scope>
    <source>
        <strain>CJ2</strain>
    </source>
</reference>
<organism>
    <name type="scientific">Polaromonas naphthalenivorans (strain CJ2)</name>
    <dbReference type="NCBI Taxonomy" id="365044"/>
    <lineage>
        <taxon>Bacteria</taxon>
        <taxon>Pseudomonadati</taxon>
        <taxon>Pseudomonadota</taxon>
        <taxon>Betaproteobacteria</taxon>
        <taxon>Burkholderiales</taxon>
        <taxon>Comamonadaceae</taxon>
        <taxon>Polaromonas</taxon>
    </lineage>
</organism>
<evidence type="ECO:0000255" key="1">
    <source>
        <dbReference type="HAMAP-Rule" id="MF_00036"/>
    </source>
</evidence>
<name>SYA_POLNA</name>